<dbReference type="EC" id="4.3.2.10" evidence="1"/>
<dbReference type="EMBL" id="CP000227">
    <property type="protein sequence ID" value="ACM11911.1"/>
    <property type="molecule type" value="Genomic_DNA"/>
</dbReference>
<dbReference type="SMR" id="B9IV00"/>
<dbReference type="KEGG" id="bcq:BCQ_1483"/>
<dbReference type="HOGENOM" id="CLU_048577_4_0_9"/>
<dbReference type="UniPathway" id="UPA00031">
    <property type="reaction ID" value="UER00010"/>
</dbReference>
<dbReference type="Proteomes" id="UP000000441">
    <property type="component" value="Chromosome"/>
</dbReference>
<dbReference type="GO" id="GO:0005737">
    <property type="term" value="C:cytoplasm"/>
    <property type="evidence" value="ECO:0007669"/>
    <property type="project" value="UniProtKB-SubCell"/>
</dbReference>
<dbReference type="GO" id="GO:0000107">
    <property type="term" value="F:imidazoleglycerol-phosphate synthase activity"/>
    <property type="evidence" value="ECO:0007669"/>
    <property type="project" value="UniProtKB-UniRule"/>
</dbReference>
<dbReference type="GO" id="GO:0016829">
    <property type="term" value="F:lyase activity"/>
    <property type="evidence" value="ECO:0007669"/>
    <property type="project" value="UniProtKB-KW"/>
</dbReference>
<dbReference type="GO" id="GO:0000105">
    <property type="term" value="P:L-histidine biosynthetic process"/>
    <property type="evidence" value="ECO:0007669"/>
    <property type="project" value="UniProtKB-UniRule"/>
</dbReference>
<dbReference type="CDD" id="cd04731">
    <property type="entry name" value="HisF"/>
    <property type="match status" value="1"/>
</dbReference>
<dbReference type="FunFam" id="3.20.20.70:FF:000006">
    <property type="entry name" value="Imidazole glycerol phosphate synthase subunit HisF"/>
    <property type="match status" value="1"/>
</dbReference>
<dbReference type="Gene3D" id="3.20.20.70">
    <property type="entry name" value="Aldolase class I"/>
    <property type="match status" value="1"/>
</dbReference>
<dbReference type="HAMAP" id="MF_01013">
    <property type="entry name" value="HisF"/>
    <property type="match status" value="1"/>
</dbReference>
<dbReference type="InterPro" id="IPR013785">
    <property type="entry name" value="Aldolase_TIM"/>
</dbReference>
<dbReference type="InterPro" id="IPR006062">
    <property type="entry name" value="His_biosynth"/>
</dbReference>
<dbReference type="InterPro" id="IPR004651">
    <property type="entry name" value="HisF"/>
</dbReference>
<dbReference type="InterPro" id="IPR050064">
    <property type="entry name" value="IGPS_HisA/HisF"/>
</dbReference>
<dbReference type="InterPro" id="IPR011060">
    <property type="entry name" value="RibuloseP-bd_barrel"/>
</dbReference>
<dbReference type="NCBIfam" id="TIGR00735">
    <property type="entry name" value="hisF"/>
    <property type="match status" value="1"/>
</dbReference>
<dbReference type="PANTHER" id="PTHR21235:SF2">
    <property type="entry name" value="IMIDAZOLE GLYCEROL PHOSPHATE SYNTHASE HISHF"/>
    <property type="match status" value="1"/>
</dbReference>
<dbReference type="PANTHER" id="PTHR21235">
    <property type="entry name" value="IMIDAZOLE GLYCEROL PHOSPHATE SYNTHASE SUBUNIT HISF/H IGP SYNTHASE SUBUNIT HISF/H"/>
    <property type="match status" value="1"/>
</dbReference>
<dbReference type="Pfam" id="PF00977">
    <property type="entry name" value="His_biosynth"/>
    <property type="match status" value="1"/>
</dbReference>
<dbReference type="SUPFAM" id="SSF51366">
    <property type="entry name" value="Ribulose-phoshate binding barrel"/>
    <property type="match status" value="1"/>
</dbReference>
<gene>
    <name evidence="1" type="primary">hisF</name>
    <name type="ordered locus">BCQ_1483</name>
</gene>
<sequence>MLAKRIIPCLDVKEGRVVKGVNFIGLQDVGDPVEIAALYNDAGADEIVFLDITATHEGRKTIIDVVEKTASKVFIPLTVGGGISSVKDMYNLLRAGADKVSINSAAVRNPKLIEEGAEHFGSQCIVVAIDARKVAEDKWNVYVNGGRVDTGIDAIGWAKRVTELGAGEILLTSMDADGTKNGYDLRLTEEISKSVSVPVIASGGCGHADHIIEVFQKTTVDAALAASIFHYGEATIGDVKRKLRNANVEVRL</sequence>
<name>HIS6_BACCQ</name>
<organism>
    <name type="scientific">Bacillus cereus (strain Q1)</name>
    <dbReference type="NCBI Taxonomy" id="361100"/>
    <lineage>
        <taxon>Bacteria</taxon>
        <taxon>Bacillati</taxon>
        <taxon>Bacillota</taxon>
        <taxon>Bacilli</taxon>
        <taxon>Bacillales</taxon>
        <taxon>Bacillaceae</taxon>
        <taxon>Bacillus</taxon>
        <taxon>Bacillus cereus group</taxon>
    </lineage>
</organism>
<protein>
    <recommendedName>
        <fullName evidence="1">Imidazole glycerol phosphate synthase subunit HisF</fullName>
        <ecNumber evidence="1">4.3.2.10</ecNumber>
    </recommendedName>
    <alternativeName>
        <fullName evidence="1">IGP synthase cyclase subunit</fullName>
    </alternativeName>
    <alternativeName>
        <fullName evidence="1">IGP synthase subunit HisF</fullName>
    </alternativeName>
    <alternativeName>
        <fullName evidence="1">ImGP synthase subunit HisF</fullName>
        <shortName evidence="1">IGPS subunit HisF</shortName>
    </alternativeName>
</protein>
<keyword id="KW-0028">Amino-acid biosynthesis</keyword>
<keyword id="KW-0963">Cytoplasm</keyword>
<keyword id="KW-0368">Histidine biosynthesis</keyword>
<keyword id="KW-0456">Lyase</keyword>
<evidence type="ECO:0000255" key="1">
    <source>
        <dbReference type="HAMAP-Rule" id="MF_01013"/>
    </source>
</evidence>
<reference key="1">
    <citation type="journal article" date="2009" name="J. Bacteriol.">
        <title>Complete genome sequence of the extremophilic Bacillus cereus strain Q1 with industrial applications.</title>
        <authorList>
            <person name="Xiong Z."/>
            <person name="Jiang Y."/>
            <person name="Qi D."/>
            <person name="Lu H."/>
            <person name="Yang F."/>
            <person name="Yang J."/>
            <person name="Chen L."/>
            <person name="Sun L."/>
            <person name="Xu X."/>
            <person name="Xue Y."/>
            <person name="Zhu Y."/>
            <person name="Jin Q."/>
        </authorList>
    </citation>
    <scope>NUCLEOTIDE SEQUENCE [LARGE SCALE GENOMIC DNA]</scope>
    <source>
        <strain>Q1</strain>
    </source>
</reference>
<comment type="function">
    <text evidence="1">IGPS catalyzes the conversion of PRFAR and glutamine to IGP, AICAR and glutamate. The HisF subunit catalyzes the cyclization activity that produces IGP and AICAR from PRFAR using the ammonia provided by the HisH subunit.</text>
</comment>
<comment type="catalytic activity">
    <reaction evidence="1">
        <text>5-[(5-phospho-1-deoxy-D-ribulos-1-ylimino)methylamino]-1-(5-phospho-beta-D-ribosyl)imidazole-4-carboxamide + L-glutamine = D-erythro-1-(imidazol-4-yl)glycerol 3-phosphate + 5-amino-1-(5-phospho-beta-D-ribosyl)imidazole-4-carboxamide + L-glutamate + H(+)</text>
        <dbReference type="Rhea" id="RHEA:24793"/>
        <dbReference type="ChEBI" id="CHEBI:15378"/>
        <dbReference type="ChEBI" id="CHEBI:29985"/>
        <dbReference type="ChEBI" id="CHEBI:58278"/>
        <dbReference type="ChEBI" id="CHEBI:58359"/>
        <dbReference type="ChEBI" id="CHEBI:58475"/>
        <dbReference type="ChEBI" id="CHEBI:58525"/>
        <dbReference type="EC" id="4.3.2.10"/>
    </reaction>
</comment>
<comment type="pathway">
    <text evidence="1">Amino-acid biosynthesis; L-histidine biosynthesis; L-histidine from 5-phospho-alpha-D-ribose 1-diphosphate: step 5/9.</text>
</comment>
<comment type="subunit">
    <text evidence="1">Heterodimer of HisH and HisF.</text>
</comment>
<comment type="subcellular location">
    <subcellularLocation>
        <location evidence="1">Cytoplasm</location>
    </subcellularLocation>
</comment>
<comment type="similarity">
    <text evidence="1">Belongs to the HisA/HisF family.</text>
</comment>
<feature type="chain" id="PRO_1000148904" description="Imidazole glycerol phosphate synthase subunit HisF">
    <location>
        <begin position="1"/>
        <end position="252"/>
    </location>
</feature>
<feature type="active site" evidence="1">
    <location>
        <position position="11"/>
    </location>
</feature>
<feature type="active site" evidence="1">
    <location>
        <position position="130"/>
    </location>
</feature>
<proteinExistence type="inferred from homology"/>
<accession>B9IV00</accession>